<accession>A7A060</accession>
<comment type="function">
    <text evidence="1">Plays a role in cell wall integrity. Affects the cell wall polymer composition in the growing region of the cell (By similarity).</text>
</comment>
<comment type="subcellular location">
    <subcellularLocation>
        <location evidence="1">Cell membrane</location>
        <topology evidence="1">Single-pass type III membrane protein</topology>
        <orientation evidence="1">Cytoplasmic side</orientation>
    </subcellularLocation>
    <subcellularLocation>
        <location evidence="1">Bud membrane</location>
        <topology evidence="1">Single-pass type III membrane protein</topology>
        <orientation evidence="1">Cytoplasmic side</orientation>
    </subcellularLocation>
    <text evidence="1">Localizes on the inner surface of the plasma membrane at the bud and in the daughter cell. Localizes at an incipient bud site in the cells with emerging buds, a bud tip in small- or medium-budded cells, and a cell periphery in large-budded cells.</text>
</comment>
<comment type="similarity">
    <text evidence="5">Belongs to the SKG1 family.</text>
</comment>
<keyword id="KW-1003">Cell membrane</keyword>
<keyword id="KW-0961">Cell wall biogenesis/degradation</keyword>
<keyword id="KW-0472">Membrane</keyword>
<keyword id="KW-0597">Phosphoprotein</keyword>
<keyword id="KW-0735">Signal-anchor</keyword>
<keyword id="KW-0812">Transmembrane</keyword>
<keyword id="KW-1133">Transmembrane helix</keyword>
<feature type="chain" id="PRO_0000399675" description="Suppressor of lethality of KEX2 GAS1 double null mutant protein 1">
    <location>
        <begin position="1"/>
        <end position="355"/>
    </location>
</feature>
<feature type="topological domain" description="Extracellular" evidence="3">
    <location>
        <begin position="1"/>
        <end position="8"/>
    </location>
</feature>
<feature type="transmembrane region" description="Helical; Signal-anchor for type III membrane protein" evidence="3">
    <location>
        <begin position="9"/>
        <end position="29"/>
    </location>
</feature>
<feature type="topological domain" description="Cytoplasmic" evidence="3">
    <location>
        <begin position="30"/>
        <end position="355"/>
    </location>
</feature>
<feature type="region of interest" description="Disordered" evidence="4">
    <location>
        <begin position="70"/>
        <end position="114"/>
    </location>
</feature>
<feature type="region of interest" description="Disordered" evidence="4">
    <location>
        <begin position="281"/>
        <end position="304"/>
    </location>
</feature>
<feature type="compositionally biased region" description="Basic and acidic residues" evidence="4">
    <location>
        <begin position="92"/>
        <end position="108"/>
    </location>
</feature>
<feature type="compositionally biased region" description="Basic and acidic residues" evidence="4">
    <location>
        <begin position="286"/>
        <end position="304"/>
    </location>
</feature>
<feature type="modified residue" description="Phosphoserine" evidence="2">
    <location>
        <position position="142"/>
    </location>
</feature>
<feature type="modified residue" description="Phosphothreonine" evidence="2">
    <location>
        <position position="273"/>
    </location>
</feature>
<organism>
    <name type="scientific">Saccharomyces cerevisiae (strain YJM789)</name>
    <name type="common">Baker's yeast</name>
    <dbReference type="NCBI Taxonomy" id="307796"/>
    <lineage>
        <taxon>Eukaryota</taxon>
        <taxon>Fungi</taxon>
        <taxon>Dikarya</taxon>
        <taxon>Ascomycota</taxon>
        <taxon>Saccharomycotina</taxon>
        <taxon>Saccharomycetes</taxon>
        <taxon>Saccharomycetales</taxon>
        <taxon>Saccharomycetaceae</taxon>
        <taxon>Saccharomyces</taxon>
    </lineage>
</organism>
<proteinExistence type="inferred from homology"/>
<dbReference type="EMBL" id="AAFW02000152">
    <property type="protein sequence ID" value="EDN60003.1"/>
    <property type="molecule type" value="Genomic_DNA"/>
</dbReference>
<dbReference type="HOGENOM" id="CLU_079389_0_0_1"/>
<dbReference type="Proteomes" id="UP000007060">
    <property type="component" value="Unassembled WGS sequence"/>
</dbReference>
<dbReference type="GO" id="GO:0033101">
    <property type="term" value="C:cellular bud membrane"/>
    <property type="evidence" value="ECO:0007669"/>
    <property type="project" value="UniProtKB-SubCell"/>
</dbReference>
<dbReference type="GO" id="GO:0071555">
    <property type="term" value="P:cell wall organization"/>
    <property type="evidence" value="ECO:0007669"/>
    <property type="project" value="UniProtKB-KW"/>
</dbReference>
<reference key="1">
    <citation type="journal article" date="2007" name="Proc. Natl. Acad. Sci. U.S.A.">
        <title>Genome sequencing and comparative analysis of Saccharomyces cerevisiae strain YJM789.</title>
        <authorList>
            <person name="Wei W."/>
            <person name="McCusker J.H."/>
            <person name="Hyman R.W."/>
            <person name="Jones T."/>
            <person name="Ning Y."/>
            <person name="Cao Z."/>
            <person name="Gu Z."/>
            <person name="Bruno D."/>
            <person name="Miranda M."/>
            <person name="Nguyen M."/>
            <person name="Wilhelmy J."/>
            <person name="Komp C."/>
            <person name="Tamse R."/>
            <person name="Wang X."/>
            <person name="Jia P."/>
            <person name="Luedi P."/>
            <person name="Oefner P.J."/>
            <person name="David L."/>
            <person name="Dietrich F.S."/>
            <person name="Li Y."/>
            <person name="Davis R.W."/>
            <person name="Steinmetz L.M."/>
        </authorList>
    </citation>
    <scope>NUCLEOTIDE SEQUENCE [LARGE SCALE GENOMIC DNA]</scope>
    <source>
        <strain>YJM789</strain>
    </source>
</reference>
<protein>
    <recommendedName>
        <fullName>Suppressor of lethality of KEX2 GAS1 double null mutant protein 1</fullName>
    </recommendedName>
</protein>
<gene>
    <name type="primary">SKG1</name>
    <name type="ORF">SCY_3470</name>
</gene>
<name>SKG1_YEAS7</name>
<sequence length="355" mass="39830">MTASTSVAVGCAVGIPVGVGIIIAVCFWFNLQKRYKREEQDDRELERAIYDESGFVSFDNFGPLRDSKDEAALASSELKNPDHTSGSSEGSAHPEEKDGKSRDQEKPLGKKNSKYYVPAYRRKINLLQVRNNNYGNNARQKSVVDLPSINNSSNVSLSSSQRHITKRQISVYDQMVPVISDEGPNFFADPSSDTNTSNDQNKASMIELKHNTRQSSNENLIRNLQNQDFGSYYPRRASSSFLNGNISNASFHTRNSSITSVNKRDALEDVFATPKSAAQSQLPNTFDKDNEGMDADHSVKDSRSAITDKDKDLYKLQNNYDVGNIGEIAEEDQYENEFTNYSQSKREFIESLRPK</sequence>
<evidence type="ECO:0000250" key="1"/>
<evidence type="ECO:0000250" key="2">
    <source>
        <dbReference type="UniProtKB" id="P36169"/>
    </source>
</evidence>
<evidence type="ECO:0000255" key="3"/>
<evidence type="ECO:0000256" key="4">
    <source>
        <dbReference type="SAM" id="MobiDB-lite"/>
    </source>
</evidence>
<evidence type="ECO:0000305" key="5"/>